<reference key="1">
    <citation type="journal article" date="2000" name="J. Biol. Chem.">
        <title>A eukaryotic SWI2/SNF2 domain, an exquisite detector of double-stranded to single-stranded DNA transition elements.</title>
        <authorList>
            <person name="Muthuswami R."/>
            <person name="Truman P.A."/>
            <person name="Mesner L.D."/>
            <person name="Hockensmith J.W."/>
        </authorList>
    </citation>
    <scope>NUCLEOTIDE SEQUENCE [MRNA]</scope>
    <source>
        <tissue>Thymus</tissue>
    </source>
</reference>
<reference key="2">
    <citation type="journal article" date="2009" name="Genome Biol.">
        <title>A whole-genome assembly of the domestic cow, Bos taurus.</title>
        <authorList>
            <person name="Zimin A.V."/>
            <person name="Delcher A.L."/>
            <person name="Florea L."/>
            <person name="Kelley D.R."/>
            <person name="Schatz M.C."/>
            <person name="Puiu D."/>
            <person name="Hanrahan F."/>
            <person name="Pertea G."/>
            <person name="Van Tassell C.P."/>
            <person name="Sonstegard T.S."/>
            <person name="Marcais G."/>
            <person name="Roberts M."/>
            <person name="Subramanian P."/>
            <person name="Yorke J.A."/>
            <person name="Salzberg S.L."/>
        </authorList>
    </citation>
    <scope>NUCLEOTIDE SEQUENCE [LARGE SCALE GENOMIC DNA]</scope>
    <source>
        <strain>Hereford</strain>
    </source>
</reference>
<reference key="3">
    <citation type="journal article" date="2009" name="BMC Genomics">
        <title>Functional genomics of HMGN3a and SMARCAL1 in early mammalian embryogenesis.</title>
        <authorList>
            <person name="Uzun A."/>
            <person name="Rodriguez-Osorio N."/>
            <person name="Kaya A."/>
            <person name="Wang H."/>
            <person name="Parrish J.J."/>
            <person name="Ilyin V.A."/>
            <person name="Memili E."/>
        </authorList>
    </citation>
    <scope>TISSUE SPECIFICITY</scope>
    <scope>DEVELOPMENTAL STAGE</scope>
    <scope>PHYLOGENY</scope>
</reference>
<gene>
    <name type="primary">SMARCAL1</name>
    <name type="synonym">HARP</name>
</gene>
<dbReference type="EC" id="3.6.4.-" evidence="2"/>
<dbReference type="EMBL" id="AF173643">
    <property type="protein sequence ID" value="AAF22285.1"/>
    <property type="molecule type" value="mRNA"/>
</dbReference>
<dbReference type="EMBL" id="DAAA02005900">
    <property type="status" value="NOT_ANNOTATED_CDS"/>
    <property type="molecule type" value="Genomic_DNA"/>
</dbReference>
<dbReference type="RefSeq" id="NP_788839.1">
    <property type="nucleotide sequence ID" value="NM_176666.1"/>
</dbReference>
<dbReference type="SMR" id="Q9TTA5"/>
<dbReference type="FunCoup" id="Q9TTA5">
    <property type="interactions" value="4391"/>
</dbReference>
<dbReference type="STRING" id="9913.ENSBTAP00000005013"/>
<dbReference type="PaxDb" id="9913-ENSBTAP00000005013"/>
<dbReference type="GeneID" id="338072"/>
<dbReference type="KEGG" id="bta:338072"/>
<dbReference type="CTD" id="50485"/>
<dbReference type="eggNOG" id="KOG1000">
    <property type="taxonomic scope" value="Eukaryota"/>
</dbReference>
<dbReference type="HOGENOM" id="CLU_000315_33_1_1"/>
<dbReference type="InParanoid" id="Q9TTA5"/>
<dbReference type="OrthoDB" id="2801544at2759"/>
<dbReference type="TreeFam" id="TF106474"/>
<dbReference type="Proteomes" id="UP000009136">
    <property type="component" value="Unplaced"/>
</dbReference>
<dbReference type="GO" id="GO:0043596">
    <property type="term" value="C:nuclear replication fork"/>
    <property type="evidence" value="ECO:0000318"/>
    <property type="project" value="GO_Central"/>
</dbReference>
<dbReference type="GO" id="GO:0005634">
    <property type="term" value="C:nucleus"/>
    <property type="evidence" value="ECO:0000250"/>
    <property type="project" value="UniProtKB"/>
</dbReference>
<dbReference type="GO" id="GO:0035861">
    <property type="term" value="C:site of double-strand break"/>
    <property type="evidence" value="ECO:0000250"/>
    <property type="project" value="UniProtKB"/>
</dbReference>
<dbReference type="GO" id="GO:0005524">
    <property type="term" value="F:ATP binding"/>
    <property type="evidence" value="ECO:0007669"/>
    <property type="project" value="UniProtKB-KW"/>
</dbReference>
<dbReference type="GO" id="GO:0036310">
    <property type="term" value="F:ATP-dependent DNA/DNA annealing activity"/>
    <property type="evidence" value="ECO:0000250"/>
    <property type="project" value="UniProtKB"/>
</dbReference>
<dbReference type="GO" id="GO:0004386">
    <property type="term" value="F:helicase activity"/>
    <property type="evidence" value="ECO:0007669"/>
    <property type="project" value="UniProtKB-KW"/>
</dbReference>
<dbReference type="GO" id="GO:0016787">
    <property type="term" value="F:hydrolase activity"/>
    <property type="evidence" value="ECO:0007669"/>
    <property type="project" value="UniProtKB-KW"/>
</dbReference>
<dbReference type="GO" id="GO:0006974">
    <property type="term" value="P:DNA damage response"/>
    <property type="evidence" value="ECO:0000250"/>
    <property type="project" value="UniProtKB"/>
</dbReference>
<dbReference type="GO" id="GO:0006281">
    <property type="term" value="P:DNA repair"/>
    <property type="evidence" value="ECO:0000318"/>
    <property type="project" value="GO_Central"/>
</dbReference>
<dbReference type="GO" id="GO:0006357">
    <property type="term" value="P:regulation of transcription by RNA polymerase II"/>
    <property type="evidence" value="ECO:0000250"/>
    <property type="project" value="UniProtKB"/>
</dbReference>
<dbReference type="GO" id="GO:0031297">
    <property type="term" value="P:replication fork processing"/>
    <property type="evidence" value="ECO:0000250"/>
    <property type="project" value="UniProtKB"/>
</dbReference>
<dbReference type="CDD" id="cd18010">
    <property type="entry name" value="DEXHc_HARP_SMARCAL1"/>
    <property type="match status" value="1"/>
</dbReference>
<dbReference type="CDD" id="cd18793">
    <property type="entry name" value="SF2_C_SNF"/>
    <property type="match status" value="1"/>
</dbReference>
<dbReference type="FunFam" id="3.40.50.300:FF:001036">
    <property type="entry name" value="SWI/SNF related, matrix associated, actin dependent regulator of chromatin, subfamily a like 1"/>
    <property type="match status" value="1"/>
</dbReference>
<dbReference type="FunFam" id="3.40.50.10810:FF:000026">
    <property type="entry name" value="SWI/SNF related, matrix associated, actin dependent regulator of chromatin, subfamily a-like 1"/>
    <property type="match status" value="1"/>
</dbReference>
<dbReference type="Gene3D" id="3.40.50.300">
    <property type="entry name" value="P-loop containing nucleotide triphosphate hydrolases"/>
    <property type="match status" value="1"/>
</dbReference>
<dbReference type="Gene3D" id="3.40.50.10810">
    <property type="entry name" value="Tandem AAA-ATPase domain"/>
    <property type="match status" value="1"/>
</dbReference>
<dbReference type="InterPro" id="IPR010003">
    <property type="entry name" value="HARP_dom"/>
</dbReference>
<dbReference type="InterPro" id="IPR014001">
    <property type="entry name" value="Helicase_ATP-bd"/>
</dbReference>
<dbReference type="InterPro" id="IPR001650">
    <property type="entry name" value="Helicase_C-like"/>
</dbReference>
<dbReference type="InterPro" id="IPR027417">
    <property type="entry name" value="P-loop_NTPase"/>
</dbReference>
<dbReference type="InterPro" id="IPR038718">
    <property type="entry name" value="SNF2-like_sf"/>
</dbReference>
<dbReference type="InterPro" id="IPR049730">
    <property type="entry name" value="SNF2/RAD54-like_C"/>
</dbReference>
<dbReference type="InterPro" id="IPR000330">
    <property type="entry name" value="SNF2_N"/>
</dbReference>
<dbReference type="PANTHER" id="PTHR45766">
    <property type="entry name" value="DNA ANNEALING HELICASE AND ENDONUCLEASE ZRANB3 FAMILY MEMBER"/>
    <property type="match status" value="1"/>
</dbReference>
<dbReference type="PANTHER" id="PTHR45766:SF6">
    <property type="entry name" value="SWI_SNF-RELATED MATRIX-ASSOCIATED ACTIN-DEPENDENT REGULATOR OF CHROMATIN SUBFAMILY A-LIKE PROTEIN 1"/>
    <property type="match status" value="1"/>
</dbReference>
<dbReference type="Pfam" id="PF07443">
    <property type="entry name" value="HARP"/>
    <property type="match status" value="2"/>
</dbReference>
<dbReference type="Pfam" id="PF00271">
    <property type="entry name" value="Helicase_C"/>
    <property type="match status" value="1"/>
</dbReference>
<dbReference type="Pfam" id="PF00176">
    <property type="entry name" value="SNF2-rel_dom"/>
    <property type="match status" value="1"/>
</dbReference>
<dbReference type="SMART" id="SM00487">
    <property type="entry name" value="DEXDc"/>
    <property type="match status" value="1"/>
</dbReference>
<dbReference type="SMART" id="SM00490">
    <property type="entry name" value="HELICc"/>
    <property type="match status" value="1"/>
</dbReference>
<dbReference type="SUPFAM" id="SSF52540">
    <property type="entry name" value="P-loop containing nucleoside triphosphate hydrolases"/>
    <property type="match status" value="2"/>
</dbReference>
<dbReference type="PROSITE" id="PS51467">
    <property type="entry name" value="HARP"/>
    <property type="match status" value="2"/>
</dbReference>
<dbReference type="PROSITE" id="PS51192">
    <property type="entry name" value="HELICASE_ATP_BIND_1"/>
    <property type="match status" value="1"/>
</dbReference>
<dbReference type="PROSITE" id="PS51194">
    <property type="entry name" value="HELICASE_CTER"/>
    <property type="match status" value="1"/>
</dbReference>
<proteinExistence type="evidence at transcript level"/>
<evidence type="ECO:0000250" key="1"/>
<evidence type="ECO:0000250" key="2">
    <source>
        <dbReference type="UniProtKB" id="Q9NZC9"/>
    </source>
</evidence>
<evidence type="ECO:0000255" key="3"/>
<evidence type="ECO:0000255" key="4">
    <source>
        <dbReference type="PROSITE-ProRule" id="PRU00541"/>
    </source>
</evidence>
<evidence type="ECO:0000255" key="5">
    <source>
        <dbReference type="PROSITE-ProRule" id="PRU00542"/>
    </source>
</evidence>
<evidence type="ECO:0000255" key="6">
    <source>
        <dbReference type="PROSITE-ProRule" id="PRU00800"/>
    </source>
</evidence>
<evidence type="ECO:0000256" key="7">
    <source>
        <dbReference type="SAM" id="MobiDB-lite"/>
    </source>
</evidence>
<evidence type="ECO:0000269" key="8">
    <source>
    </source>
</evidence>
<evidence type="ECO:0000305" key="9"/>
<sequence length="940" mass="104776">MSISPLKCPCLLQRSRGKIEANRQKALARRAEKLLAEQHQKPAQSKQGPSQNLPRDPSKSGSHGIFFKQQNPSSSSHGDQRPQNPHSFSPNTSEQAKGMWQRPEEMPTACPSYRPPNQVTVAGISPPLANSPPGVPSQQLWGCELGQGHPQASLETQSTPFANTTHEPLAKVKNFQETAASSCGQPPRDPELEARMARPSTSGQNISGSVMPRTEGRLQQKAGTPLHRVVGSQQGRCIRNGERFQVKIGYNEALIAVFKSLPSRSYDPATKTWNFSMTDYGPLMKAAQRLPGITLQPLEGAEGHMESPSTSSGIIAKTGLPAAPSLAFVKGQCVLISRARFEADISYSEDLIALFKQMDSRKYDVKTRKWSFLLEEYSKLMERVRGLPQVQLDPLPKTLTLFRAQLQKTSLSPVADIPEADLSRVDSKLVSSLLPFQRAGVNFAIAQRGRLLLADDMGLGKTIQAICIAAYYRKEWPLLVVVPSSVRFTWEQAFCRWLPSLNPLDINVVVTGKDRLTDGLVNIVSFDLLSKLEKQLKPPFKVVIIDESHFLKNIKTARCRAAMPLLKVAKRVILLSGTPAMSRPAELYTQILAVRPTFFPQFHAFGLRYCGAKRQPWGWDYSGSSNLGELKLLLEEAVMLRRLKGDVLSQLPAKQARWWWSPQARSTPGPEPPWMPPPRMTTKDKTKQQQKEALILFFNRTAEAKIPSIIEYILDLLESGREKFLVFAHHKVVLDAITKELERKRVQHIRIDGSTSSADRETSASSFSCPRALRGVLSITAANMGLTFSSADLVVFGELFWNPGVLMQAEDRVHRIGQLSSVSIHYLVARGTADDYLWPLIQEKIKVLGEAGLSETNFSEMTEATDYFSKDSKQQKIYNLFQKSFEEDGNDMELLEAAESFDPGSQDTGDKLDESTLTGSPVKKKRFEFFDNWDSFTSPL</sequence>
<name>SMAL1_BOVIN</name>
<feature type="initiator methionine" description="Removed" evidence="2">
    <location>
        <position position="1"/>
    </location>
</feature>
<feature type="chain" id="PRO_0000074347" description="SWI/SNF-related matrix-associated actin-dependent regulator of chromatin subfamily A-like protein 1">
    <location>
        <begin position="2"/>
        <end position="940"/>
    </location>
</feature>
<feature type="domain" description="HARP 1" evidence="6">
    <location>
        <begin position="229"/>
        <end position="299"/>
    </location>
</feature>
<feature type="domain" description="HARP 2" evidence="6">
    <location>
        <begin position="325"/>
        <end position="396"/>
    </location>
</feature>
<feature type="domain" description="Helicase ATP-binding" evidence="4">
    <location>
        <begin position="442"/>
        <end position="597"/>
    </location>
</feature>
<feature type="domain" description="Helicase C-terminal" evidence="5">
    <location>
        <begin position="708"/>
        <end position="864"/>
    </location>
</feature>
<feature type="region of interest" description="Disordered" evidence="7">
    <location>
        <begin position="1"/>
        <end position="155"/>
    </location>
</feature>
<feature type="region of interest" description="Mediates interaction with RPA2" evidence="1">
    <location>
        <begin position="2"/>
        <end position="36"/>
    </location>
</feature>
<feature type="region of interest" description="Mediates interaction with RPA2" evidence="2">
    <location>
        <begin position="11"/>
        <end position="36"/>
    </location>
</feature>
<feature type="region of interest" description="Disordered" evidence="7">
    <location>
        <begin position="662"/>
        <end position="682"/>
    </location>
</feature>
<feature type="region of interest" description="Disordered" evidence="7">
    <location>
        <begin position="899"/>
        <end position="918"/>
    </location>
</feature>
<feature type="coiled-coil region" evidence="3">
    <location>
        <begin position="18"/>
        <end position="40"/>
    </location>
</feature>
<feature type="short sequence motif" description="DESH box">
    <location>
        <begin position="546"/>
        <end position="549"/>
    </location>
</feature>
<feature type="short sequence motif" description="Nuclear localization signal" evidence="2">
    <location>
        <begin position="641"/>
        <end position="658"/>
    </location>
</feature>
<feature type="compositionally biased region" description="Basic and acidic residues" evidence="7">
    <location>
        <begin position="17"/>
        <end position="40"/>
    </location>
</feature>
<feature type="compositionally biased region" description="Polar residues" evidence="7">
    <location>
        <begin position="41"/>
        <end position="53"/>
    </location>
</feature>
<feature type="compositionally biased region" description="Polar residues" evidence="7">
    <location>
        <begin position="68"/>
        <end position="95"/>
    </location>
</feature>
<feature type="compositionally biased region" description="Pro residues" evidence="7">
    <location>
        <begin position="669"/>
        <end position="679"/>
    </location>
</feature>
<feature type="binding site" evidence="4">
    <location>
        <begin position="455"/>
        <end position="462"/>
    </location>
    <ligand>
        <name>ATP</name>
        <dbReference type="ChEBI" id="CHEBI:30616"/>
    </ligand>
</feature>
<feature type="modified residue" description="N-acetylserine" evidence="2">
    <location>
        <position position="2"/>
    </location>
</feature>
<feature type="modified residue" description="Phosphoserine" evidence="2">
    <location>
        <position position="125"/>
    </location>
</feature>
<feature type="modified residue" description="Phosphoserine" evidence="2">
    <location>
        <position position="131"/>
    </location>
</feature>
<feature type="modified residue" description="Phosphoserine" evidence="2">
    <location>
        <position position="153"/>
    </location>
</feature>
<feature type="modified residue" description="Phosphoserine" evidence="2">
    <location>
        <position position="200"/>
    </location>
</feature>
<feature type="sequence conflict" description="In Ref. 1; AAF22285." evidence="9" ref="1">
    <original>G</original>
    <variation>GK</variation>
    <location>
        <position position="17"/>
    </location>
</feature>
<feature type="sequence conflict" description="In Ref. 1; AAF22285." evidence="9" ref="1">
    <original>S</original>
    <variation>P</variation>
    <location>
        <position position="89"/>
    </location>
</feature>
<feature type="sequence conflict" description="In Ref. 1; AAF22285." evidence="9" ref="1">
    <original>P</original>
    <variation>L</variation>
    <location>
        <position position="126"/>
    </location>
</feature>
<feature type="sequence conflict" description="In Ref. 1; AAF22285." evidence="9" ref="1">
    <original>A</original>
    <variation>T</variation>
    <location>
        <position position="162"/>
    </location>
</feature>
<feature type="sequence conflict" description="In Ref. 1; AAF22285." evidence="9" ref="1">
    <original>A</original>
    <variation>R</variation>
    <location>
        <position position="170"/>
    </location>
</feature>
<feature type="sequence conflict" description="In Ref. 1; AAF22285." evidence="9" ref="1">
    <original>MA</original>
    <variation>IG</variation>
    <location>
        <begin position="196"/>
        <end position="197"/>
    </location>
</feature>
<feature type="sequence conflict" description="In Ref. 1; AAF22285." evidence="9" ref="1">
    <original>L</original>
    <variation>P</variation>
    <location>
        <position position="387"/>
    </location>
</feature>
<feature type="sequence conflict" description="In Ref. 1; AAF22285." evidence="9" ref="1">
    <original>RCR</original>
    <variation>VC</variation>
    <location>
        <begin position="558"/>
        <end position="560"/>
    </location>
</feature>
<feature type="sequence conflict" description="In Ref. 1; AAF22285." evidence="9" ref="1">
    <original>A</original>
    <variation>P</variation>
    <location>
        <position position="656"/>
    </location>
</feature>
<feature type="sequence conflict" description="In Ref. 1; AAF22285." evidence="9" ref="1">
    <original>T</original>
    <variation>M</variation>
    <location>
        <position position="667"/>
    </location>
</feature>
<feature type="sequence conflict" description="In Ref. 1; AAF22285." evidence="9" ref="1">
    <original>PR</original>
    <variation>AKE</variation>
    <location>
        <begin position="678"/>
        <end position="679"/>
    </location>
</feature>
<accession>Q9TTA5</accession>
<accession>F1MDP3</accession>
<keyword id="KW-0007">Acetylation</keyword>
<keyword id="KW-0175">Coiled coil</keyword>
<keyword id="KW-0378">Hydrolase</keyword>
<keyword id="KW-0539">Nucleus</keyword>
<keyword id="KW-0597">Phosphoprotein</keyword>
<keyword id="KW-1185">Reference proteome</keyword>
<keyword id="KW-0677">Repeat</keyword>
<organism>
    <name type="scientific">Bos taurus</name>
    <name type="common">Bovine</name>
    <dbReference type="NCBI Taxonomy" id="9913"/>
    <lineage>
        <taxon>Eukaryota</taxon>
        <taxon>Metazoa</taxon>
        <taxon>Chordata</taxon>
        <taxon>Craniata</taxon>
        <taxon>Vertebrata</taxon>
        <taxon>Euteleostomi</taxon>
        <taxon>Mammalia</taxon>
        <taxon>Eutheria</taxon>
        <taxon>Laurasiatheria</taxon>
        <taxon>Artiodactyla</taxon>
        <taxon>Ruminantia</taxon>
        <taxon>Pecora</taxon>
        <taxon>Bovidae</taxon>
        <taxon>Bovinae</taxon>
        <taxon>Bos</taxon>
    </lineage>
</organism>
<comment type="function">
    <text evidence="2">ATP-dependent annealing helicase that binds selectively to fork DNA relative to ssDNA or dsDNA and catalyzes the rewinding of the stably unwound DNA. Rewinds single-stranded DNA bubbles that are stably bound by replication protein A (RPA). Acts throughout the genome to reanneal stably unwound DNA, performing the opposite reaction of many enzymes, such as helicases and polymerases, that unwind DNA. May play an important role in DNA damage response by acting at stalled replication forks.</text>
</comment>
<comment type="catalytic activity">
    <reaction evidence="2">
        <text>ATP + H2O = ADP + phosphate + H(+)</text>
        <dbReference type="Rhea" id="RHEA:13065"/>
        <dbReference type="ChEBI" id="CHEBI:15377"/>
        <dbReference type="ChEBI" id="CHEBI:15378"/>
        <dbReference type="ChEBI" id="CHEBI:30616"/>
        <dbReference type="ChEBI" id="CHEBI:43474"/>
        <dbReference type="ChEBI" id="CHEBI:456216"/>
    </reaction>
    <physiologicalReaction direction="left-to-right" evidence="2">
        <dbReference type="Rhea" id="RHEA:13066"/>
    </physiologicalReaction>
</comment>
<comment type="subunit">
    <text evidence="1">Interacts with RPA2; the interaction is direct and mediates the recruitment by the RPA complex of SMARCAL1 to sites of DNA damage.</text>
</comment>
<comment type="subcellular location">
    <subcellularLocation>
        <location evidence="1">Nucleus</location>
    </subcellularLocation>
    <text evidence="1">Recruited to damaged DNA regions.</text>
</comment>
<comment type="tissue specificity">
    <text evidence="8">Expressed in mature oocytes, 2-4 cell stage embryos and 8-16 cell stage embryos. Expressed at lower levels in morulae and blastocysts.</text>
</comment>
<comment type="developmental stage">
    <text evidence="8">Expressed during early embryogenesis.</text>
</comment>
<comment type="PTM">
    <text evidence="1">DNA damage-regulated phosphorylation by kinases that may include ATM, ATR and PRKDC.</text>
</comment>
<comment type="similarity">
    <text evidence="6">Belongs to the SNF2/RAD54 helicase family. SMARCAL1 subfamily.</text>
</comment>
<comment type="caution">
    <text evidence="2">Like other proteins within the SNF2 family, do not possess helicase activity but instead has ATP-dependent annealing activity.</text>
</comment>
<protein>
    <recommendedName>
        <fullName>SWI/SNF-related matrix-associated actin-dependent regulator of chromatin subfamily A-like protein 1</fullName>
        <ecNumber evidence="2">3.6.4.-</ecNumber>
    </recommendedName>
    <alternativeName>
        <fullName>HepA-related protein</fullName>
    </alternativeName>
    <alternativeName>
        <fullName>Sucrose nonfermenting protein 2-like 1</fullName>
    </alternativeName>
</protein>